<name>TX117_LYCSI</name>
<sequence>MMKVLVVFALLVTLISYSSSEGIDDLEADELLSLMANEQTRKECIPKHHECTSNKHGCCRGNFFKYKCQCTTVVTQDGEQTERCFCGTPPHHKAAELVVGFGKKIFG</sequence>
<accession>B6DCK6</accession>
<reference key="1">
    <citation type="journal article" date="2010" name="Zoology">
        <title>Transcriptome analysis of the venom glands of the Chinese wolf spider Lycosa singoriensis.</title>
        <authorList>
            <person name="Zhang Y."/>
            <person name="Chen J."/>
            <person name="Tang X."/>
            <person name="Wang F."/>
            <person name="Jiang L."/>
            <person name="Xiong X."/>
            <person name="Wang M."/>
            <person name="Rong M."/>
            <person name="Liu Z."/>
            <person name="Liang S."/>
        </authorList>
    </citation>
    <scope>NUCLEOTIDE SEQUENCE [LARGE SCALE MRNA]</scope>
    <source>
        <tissue>Venom gland</tissue>
    </source>
</reference>
<proteinExistence type="evidence at transcript level"/>
<protein>
    <recommendedName>
        <fullName>U1-lycotoxin-Ls1b</fullName>
    </recommendedName>
    <alternativeName>
        <fullName>Toxin-like structure LSTX-A17</fullName>
    </alternativeName>
</protein>
<dbReference type="EMBL" id="EU925940">
    <property type="protein sequence ID" value="ACI41272.1"/>
    <property type="molecule type" value="mRNA"/>
</dbReference>
<dbReference type="EMBL" id="FM863944">
    <property type="protein sequence ID" value="CAS03542.1"/>
    <property type="molecule type" value="mRNA"/>
</dbReference>
<dbReference type="SMR" id="B6DCK6"/>
<dbReference type="ArachnoServer" id="AS000884">
    <property type="toxin name" value="U1-lycotoxin-Ls1b"/>
</dbReference>
<dbReference type="GO" id="GO:0005576">
    <property type="term" value="C:extracellular region"/>
    <property type="evidence" value="ECO:0007669"/>
    <property type="project" value="UniProtKB-SubCell"/>
</dbReference>
<dbReference type="GO" id="GO:0090729">
    <property type="term" value="F:toxin activity"/>
    <property type="evidence" value="ECO:0007669"/>
    <property type="project" value="UniProtKB-KW"/>
</dbReference>
<dbReference type="InterPro" id="IPR019553">
    <property type="entry name" value="Spider_toxin_CSTX_knottin"/>
</dbReference>
<dbReference type="InterPro" id="IPR011142">
    <property type="entry name" value="Spider_toxin_CSTX_Knottin_CS"/>
</dbReference>
<dbReference type="Pfam" id="PF10530">
    <property type="entry name" value="Toxin_35"/>
    <property type="match status" value="1"/>
</dbReference>
<dbReference type="PROSITE" id="PS60029">
    <property type="entry name" value="SPIDER_CSTX"/>
    <property type="match status" value="1"/>
</dbReference>
<keyword id="KW-1015">Disulfide bond</keyword>
<keyword id="KW-0960">Knottin</keyword>
<keyword id="KW-0964">Secreted</keyword>
<keyword id="KW-0732">Signal</keyword>
<keyword id="KW-0800">Toxin</keyword>
<evidence type="ECO:0000250" key="1"/>
<evidence type="ECO:0000255" key="2"/>
<evidence type="ECO:0000305" key="3"/>
<comment type="subcellular location">
    <subcellularLocation>
        <location evidence="1">Secreted</location>
    </subcellularLocation>
</comment>
<comment type="tissue specificity">
    <text>Expressed by the venom gland.</text>
</comment>
<comment type="domain">
    <text evidence="1">The presence of a 'disulfide through disulfide knot' structurally defines this protein as a knottin.</text>
</comment>
<comment type="similarity">
    <text evidence="3">Belongs to the neurotoxin 19 (CSTX) family. 04 (U1-Lctx) subfamily.</text>
</comment>
<feature type="signal peptide" evidence="2">
    <location>
        <begin position="1"/>
        <end position="20"/>
    </location>
</feature>
<feature type="propeptide" id="PRO_0000401531" evidence="1">
    <location>
        <begin position="21"/>
        <end position="41"/>
    </location>
</feature>
<feature type="chain" id="PRO_0000401532" description="U1-lycotoxin-Ls1b">
    <location>
        <begin position="42"/>
        <end position="107"/>
    </location>
</feature>
<feature type="disulfide bond" evidence="1">
    <location>
        <begin position="44"/>
        <end position="59"/>
    </location>
</feature>
<feature type="disulfide bond" evidence="1">
    <location>
        <begin position="51"/>
        <end position="68"/>
    </location>
</feature>
<feature type="disulfide bond" evidence="1">
    <location>
        <begin position="58"/>
        <end position="86"/>
    </location>
</feature>
<feature type="disulfide bond" evidence="1">
    <location>
        <begin position="70"/>
        <end position="84"/>
    </location>
</feature>
<organism>
    <name type="scientific">Lycosa singoriensis</name>
    <name type="common">Wolf spider</name>
    <name type="synonym">Aranea singoriensis</name>
    <dbReference type="NCBI Taxonomy" id="434756"/>
    <lineage>
        <taxon>Eukaryota</taxon>
        <taxon>Metazoa</taxon>
        <taxon>Ecdysozoa</taxon>
        <taxon>Arthropoda</taxon>
        <taxon>Chelicerata</taxon>
        <taxon>Arachnida</taxon>
        <taxon>Araneae</taxon>
        <taxon>Araneomorphae</taxon>
        <taxon>Entelegynae</taxon>
        <taxon>Lycosoidea</taxon>
        <taxon>Lycosidae</taxon>
        <taxon>Lycosa</taxon>
    </lineage>
</organism>